<evidence type="ECO:0000255" key="1">
    <source>
        <dbReference type="HAMAP-Rule" id="MF_01807"/>
    </source>
</evidence>
<evidence type="ECO:0000255" key="2">
    <source>
        <dbReference type="PROSITE-ProRule" id="PRU01246"/>
    </source>
</evidence>
<evidence type="ECO:0000255" key="3">
    <source>
        <dbReference type="PROSITE-ProRule" id="PRU01248"/>
    </source>
</evidence>
<evidence type="ECO:0000256" key="4">
    <source>
        <dbReference type="SAM" id="MobiDB-lite"/>
    </source>
</evidence>
<keyword id="KW-0131">Cell cycle</keyword>
<keyword id="KW-0132">Cell division</keyword>
<keyword id="KW-0159">Chromosome partition</keyword>
<keyword id="KW-0963">Cytoplasm</keyword>
<keyword id="KW-0229">DNA integration</keyword>
<keyword id="KW-0233">DNA recombination</keyword>
<keyword id="KW-0238">DNA-binding</keyword>
<keyword id="KW-1185">Reference proteome</keyword>
<protein>
    <recommendedName>
        <fullName evidence="1">Tyrosine recombinase XerD</fullName>
    </recommendedName>
</protein>
<sequence length="331" mass="36391">MSGQPMAGRDGARLESFLEMMSAERGAAANTLSSYEHDLADLREFLGRRGQSLTEAQTPDLSAYLTHLAAQGFAATSQARRLSSMRQFYRFLYSEGLRGDDPTGIIDAPRKGLALPKTMSVADVNRLLGLAAQEAATEGPGQLARIRMHLLLELLYATGMRVSELVSLPVKVLRQEGRFLMIRGKGNKDRMVLLSRAAIEAMEKYEAGRKALSQEKSKAAASQKKTDTAESPWLFPSNSKEGHLPRQVFARDLKDIAIRAGLTASAVSPHVLRHAFASHLLQNGADLRAVQELLGHSDISTTQIYTHVLEERLQELVQTHHPLAKQGKNLD</sequence>
<feature type="chain" id="PRO_0000095369" description="Tyrosine recombinase XerD">
    <location>
        <begin position="1"/>
        <end position="331"/>
    </location>
</feature>
<feature type="domain" description="Core-binding (CB)" evidence="3">
    <location>
        <begin position="8"/>
        <end position="93"/>
    </location>
</feature>
<feature type="domain" description="Tyr recombinase" evidence="2">
    <location>
        <begin position="114"/>
        <end position="318"/>
    </location>
</feature>
<feature type="region of interest" description="Disordered" evidence="4">
    <location>
        <begin position="214"/>
        <end position="239"/>
    </location>
</feature>
<feature type="compositionally biased region" description="Basic and acidic residues" evidence="4">
    <location>
        <begin position="214"/>
        <end position="228"/>
    </location>
</feature>
<feature type="active site" evidence="1">
    <location>
        <position position="161"/>
    </location>
</feature>
<feature type="active site" evidence="1">
    <location>
        <position position="185"/>
    </location>
</feature>
<feature type="active site" evidence="1">
    <location>
        <position position="270"/>
    </location>
</feature>
<feature type="active site" evidence="1">
    <location>
        <position position="273"/>
    </location>
</feature>
<feature type="active site" evidence="1">
    <location>
        <position position="296"/>
    </location>
</feature>
<feature type="active site" description="O-(3'-phospho-DNA)-tyrosine intermediate" evidence="1">
    <location>
        <position position="305"/>
    </location>
</feature>
<reference key="1">
    <citation type="journal article" date="2001" name="Science">
        <title>The genome of the natural genetic engineer Agrobacterium tumefaciens C58.</title>
        <authorList>
            <person name="Wood D.W."/>
            <person name="Setubal J.C."/>
            <person name="Kaul R."/>
            <person name="Monks D.E."/>
            <person name="Kitajima J.P."/>
            <person name="Okura V.K."/>
            <person name="Zhou Y."/>
            <person name="Chen L."/>
            <person name="Wood G.E."/>
            <person name="Almeida N.F. Jr."/>
            <person name="Woo L."/>
            <person name="Chen Y."/>
            <person name="Paulsen I.T."/>
            <person name="Eisen J.A."/>
            <person name="Karp P.D."/>
            <person name="Bovee D. Sr."/>
            <person name="Chapman P."/>
            <person name="Clendenning J."/>
            <person name="Deatherage G."/>
            <person name="Gillet W."/>
            <person name="Grant C."/>
            <person name="Kutyavin T."/>
            <person name="Levy R."/>
            <person name="Li M.-J."/>
            <person name="McClelland E."/>
            <person name="Palmieri A."/>
            <person name="Raymond C."/>
            <person name="Rouse G."/>
            <person name="Saenphimmachak C."/>
            <person name="Wu Z."/>
            <person name="Romero P."/>
            <person name="Gordon D."/>
            <person name="Zhang S."/>
            <person name="Yoo H."/>
            <person name="Tao Y."/>
            <person name="Biddle P."/>
            <person name="Jung M."/>
            <person name="Krespan W."/>
            <person name="Perry M."/>
            <person name="Gordon-Kamm B."/>
            <person name="Liao L."/>
            <person name="Kim S."/>
            <person name="Hendrick C."/>
            <person name="Zhao Z.-Y."/>
            <person name="Dolan M."/>
            <person name="Chumley F."/>
            <person name="Tingey S.V."/>
            <person name="Tomb J.-F."/>
            <person name="Gordon M.P."/>
            <person name="Olson M.V."/>
            <person name="Nester E.W."/>
        </authorList>
    </citation>
    <scope>NUCLEOTIDE SEQUENCE [LARGE SCALE GENOMIC DNA]</scope>
    <source>
        <strain>C58 / ATCC 33970</strain>
    </source>
</reference>
<reference key="2">
    <citation type="journal article" date="2001" name="Science">
        <title>Genome sequence of the plant pathogen and biotechnology agent Agrobacterium tumefaciens C58.</title>
        <authorList>
            <person name="Goodner B."/>
            <person name="Hinkle G."/>
            <person name="Gattung S."/>
            <person name="Miller N."/>
            <person name="Blanchard M."/>
            <person name="Qurollo B."/>
            <person name="Goldman B.S."/>
            <person name="Cao Y."/>
            <person name="Askenazi M."/>
            <person name="Halling C."/>
            <person name="Mullin L."/>
            <person name="Houmiel K."/>
            <person name="Gordon J."/>
            <person name="Vaudin M."/>
            <person name="Iartchouk O."/>
            <person name="Epp A."/>
            <person name="Liu F."/>
            <person name="Wollam C."/>
            <person name="Allinger M."/>
            <person name="Doughty D."/>
            <person name="Scott C."/>
            <person name="Lappas C."/>
            <person name="Markelz B."/>
            <person name="Flanagan C."/>
            <person name="Crowell C."/>
            <person name="Gurson J."/>
            <person name="Lomo C."/>
            <person name="Sear C."/>
            <person name="Strub G."/>
            <person name="Cielo C."/>
            <person name="Slater S."/>
        </authorList>
    </citation>
    <scope>NUCLEOTIDE SEQUENCE [LARGE SCALE GENOMIC DNA]</scope>
    <source>
        <strain>C58 / ATCC 33970</strain>
    </source>
</reference>
<accession>Q8U9U6</accession>
<dbReference type="EMBL" id="AE007870">
    <property type="protein sequence ID" value="AAK89768.1"/>
    <property type="molecule type" value="Genomic_DNA"/>
</dbReference>
<dbReference type="PIR" id="AC3003">
    <property type="entry name" value="AC3003"/>
</dbReference>
<dbReference type="PIR" id="F98280">
    <property type="entry name" value="F98280"/>
</dbReference>
<dbReference type="RefSeq" id="NP_356983.1">
    <property type="nucleotide sequence ID" value="NC_003063.2"/>
</dbReference>
<dbReference type="RefSeq" id="WP_010973199.1">
    <property type="nucleotide sequence ID" value="NC_003063.2"/>
</dbReference>
<dbReference type="SMR" id="Q8U9U6"/>
<dbReference type="STRING" id="176299.Atu3629"/>
<dbReference type="EnsemblBacteria" id="AAK89768">
    <property type="protein sequence ID" value="AAK89768"/>
    <property type="gene ID" value="Atu3629"/>
</dbReference>
<dbReference type="GeneID" id="1135503"/>
<dbReference type="KEGG" id="atu:Atu3629"/>
<dbReference type="PATRIC" id="fig|176299.10.peg.3475"/>
<dbReference type="eggNOG" id="COG4974">
    <property type="taxonomic scope" value="Bacteria"/>
</dbReference>
<dbReference type="HOGENOM" id="CLU_027562_9_0_5"/>
<dbReference type="OrthoDB" id="9801717at2"/>
<dbReference type="PhylomeDB" id="Q8U9U6"/>
<dbReference type="BioCyc" id="AGRO:ATU3629-MONOMER"/>
<dbReference type="Proteomes" id="UP000000813">
    <property type="component" value="Chromosome linear"/>
</dbReference>
<dbReference type="GO" id="GO:0005737">
    <property type="term" value="C:cytoplasm"/>
    <property type="evidence" value="ECO:0007669"/>
    <property type="project" value="UniProtKB-SubCell"/>
</dbReference>
<dbReference type="GO" id="GO:0003677">
    <property type="term" value="F:DNA binding"/>
    <property type="evidence" value="ECO:0007669"/>
    <property type="project" value="UniProtKB-KW"/>
</dbReference>
<dbReference type="GO" id="GO:0009037">
    <property type="term" value="F:tyrosine-based site-specific recombinase activity"/>
    <property type="evidence" value="ECO:0007669"/>
    <property type="project" value="UniProtKB-UniRule"/>
</dbReference>
<dbReference type="GO" id="GO:0051301">
    <property type="term" value="P:cell division"/>
    <property type="evidence" value="ECO:0007669"/>
    <property type="project" value="UniProtKB-KW"/>
</dbReference>
<dbReference type="GO" id="GO:0007059">
    <property type="term" value="P:chromosome segregation"/>
    <property type="evidence" value="ECO:0007669"/>
    <property type="project" value="UniProtKB-UniRule"/>
</dbReference>
<dbReference type="GO" id="GO:0006313">
    <property type="term" value="P:DNA transposition"/>
    <property type="evidence" value="ECO:0007669"/>
    <property type="project" value="UniProtKB-UniRule"/>
</dbReference>
<dbReference type="Gene3D" id="1.10.150.130">
    <property type="match status" value="1"/>
</dbReference>
<dbReference type="Gene3D" id="1.10.443.10">
    <property type="entry name" value="Intergrase catalytic core"/>
    <property type="match status" value="1"/>
</dbReference>
<dbReference type="HAMAP" id="MF_01808">
    <property type="entry name" value="Recomb_XerC_XerD"/>
    <property type="match status" value="1"/>
</dbReference>
<dbReference type="HAMAP" id="MF_01807">
    <property type="entry name" value="Recomb_XerD"/>
    <property type="match status" value="1"/>
</dbReference>
<dbReference type="InterPro" id="IPR044068">
    <property type="entry name" value="CB"/>
</dbReference>
<dbReference type="InterPro" id="IPR011010">
    <property type="entry name" value="DNA_brk_join_enz"/>
</dbReference>
<dbReference type="InterPro" id="IPR013762">
    <property type="entry name" value="Integrase-like_cat_sf"/>
</dbReference>
<dbReference type="InterPro" id="IPR002104">
    <property type="entry name" value="Integrase_catalytic"/>
</dbReference>
<dbReference type="InterPro" id="IPR010998">
    <property type="entry name" value="Integrase_recombinase_N"/>
</dbReference>
<dbReference type="InterPro" id="IPR004107">
    <property type="entry name" value="Integrase_SAM-like_N"/>
</dbReference>
<dbReference type="InterPro" id="IPR011932">
    <property type="entry name" value="Recomb_XerD"/>
</dbReference>
<dbReference type="InterPro" id="IPR023009">
    <property type="entry name" value="Tyrosine_recombinase_XerC/XerD"/>
</dbReference>
<dbReference type="InterPro" id="IPR050090">
    <property type="entry name" value="Tyrosine_recombinase_XerCD"/>
</dbReference>
<dbReference type="NCBIfam" id="NF001399">
    <property type="entry name" value="PRK00283.1"/>
    <property type="match status" value="1"/>
</dbReference>
<dbReference type="PANTHER" id="PTHR30349">
    <property type="entry name" value="PHAGE INTEGRASE-RELATED"/>
    <property type="match status" value="1"/>
</dbReference>
<dbReference type="PANTHER" id="PTHR30349:SF90">
    <property type="entry name" value="TYROSINE RECOMBINASE XERD"/>
    <property type="match status" value="1"/>
</dbReference>
<dbReference type="Pfam" id="PF02899">
    <property type="entry name" value="Phage_int_SAM_1"/>
    <property type="match status" value="1"/>
</dbReference>
<dbReference type="Pfam" id="PF00589">
    <property type="entry name" value="Phage_integrase"/>
    <property type="match status" value="1"/>
</dbReference>
<dbReference type="SUPFAM" id="SSF56349">
    <property type="entry name" value="DNA breaking-rejoining enzymes"/>
    <property type="match status" value="1"/>
</dbReference>
<dbReference type="PROSITE" id="PS51900">
    <property type="entry name" value="CB"/>
    <property type="match status" value="1"/>
</dbReference>
<dbReference type="PROSITE" id="PS51898">
    <property type="entry name" value="TYR_RECOMBINASE"/>
    <property type="match status" value="1"/>
</dbReference>
<comment type="function">
    <text evidence="1">Site-specific tyrosine recombinase, which acts by catalyzing the cutting and rejoining of the recombining DNA molecules. The XerC-XerD complex is essential to convert dimers of the bacterial chromosome into monomers to permit their segregation at cell division. It also contributes to the segregational stability of plasmids.</text>
</comment>
<comment type="subunit">
    <text evidence="1">Forms a cyclic heterotetrameric complex composed of two molecules of XerC and two molecules of XerD.</text>
</comment>
<comment type="subcellular location">
    <subcellularLocation>
        <location evidence="1">Cytoplasm</location>
    </subcellularLocation>
</comment>
<comment type="similarity">
    <text evidence="1">Belongs to the 'phage' integrase family. XerD subfamily.</text>
</comment>
<name>XERD_AGRFC</name>
<organism>
    <name type="scientific">Agrobacterium fabrum (strain C58 / ATCC 33970)</name>
    <name type="common">Agrobacterium tumefaciens (strain C58)</name>
    <dbReference type="NCBI Taxonomy" id="176299"/>
    <lineage>
        <taxon>Bacteria</taxon>
        <taxon>Pseudomonadati</taxon>
        <taxon>Pseudomonadota</taxon>
        <taxon>Alphaproteobacteria</taxon>
        <taxon>Hyphomicrobiales</taxon>
        <taxon>Rhizobiaceae</taxon>
        <taxon>Rhizobium/Agrobacterium group</taxon>
        <taxon>Agrobacterium</taxon>
        <taxon>Agrobacterium tumefaciens complex</taxon>
    </lineage>
</organism>
<proteinExistence type="inferred from homology"/>
<gene>
    <name evidence="1" type="primary">xerD</name>
    <name type="ordered locus">Atu3629</name>
    <name type="ORF">AGR_L_2396</name>
</gene>